<proteinExistence type="inferred from homology"/>
<feature type="chain" id="PRO_0000245985" description="FMN-dependent NADH:quinone oxidoreductase 2">
    <location>
        <begin position="1"/>
        <end position="216"/>
    </location>
</feature>
<feature type="binding site" evidence="1">
    <location>
        <position position="9"/>
    </location>
    <ligand>
        <name>FMN</name>
        <dbReference type="ChEBI" id="CHEBI:58210"/>
    </ligand>
</feature>
<feature type="binding site" evidence="1">
    <location>
        <begin position="15"/>
        <end position="17"/>
    </location>
    <ligand>
        <name>FMN</name>
        <dbReference type="ChEBI" id="CHEBI:58210"/>
    </ligand>
</feature>
<feature type="binding site" evidence="1">
    <location>
        <begin position="96"/>
        <end position="99"/>
    </location>
    <ligand>
        <name>FMN</name>
        <dbReference type="ChEBI" id="CHEBI:58210"/>
    </ligand>
</feature>
<feature type="binding site" evidence="1">
    <location>
        <begin position="140"/>
        <end position="143"/>
    </location>
    <ligand>
        <name>FMN</name>
        <dbReference type="ChEBI" id="CHEBI:58210"/>
    </ligand>
</feature>
<evidence type="ECO:0000255" key="1">
    <source>
        <dbReference type="HAMAP-Rule" id="MF_01216"/>
    </source>
</evidence>
<evidence type="ECO:0000305" key="2"/>
<comment type="function">
    <text evidence="1">Quinone reductase that provides resistance to thiol-specific stress caused by electrophilic quinones.</text>
</comment>
<comment type="function">
    <text evidence="1">Also exhibits azoreductase activity. Catalyzes the reductive cleavage of the azo bond in aromatic azo compounds to the corresponding amines.</text>
</comment>
<comment type="catalytic activity">
    <reaction evidence="1">
        <text>2 a quinone + NADH + H(+) = 2 a 1,4-benzosemiquinone + NAD(+)</text>
        <dbReference type="Rhea" id="RHEA:65952"/>
        <dbReference type="ChEBI" id="CHEBI:15378"/>
        <dbReference type="ChEBI" id="CHEBI:57540"/>
        <dbReference type="ChEBI" id="CHEBI:57945"/>
        <dbReference type="ChEBI" id="CHEBI:132124"/>
        <dbReference type="ChEBI" id="CHEBI:134225"/>
    </reaction>
</comment>
<comment type="catalytic activity">
    <reaction evidence="1">
        <text>N,N-dimethyl-1,4-phenylenediamine + anthranilate + 2 NAD(+) = 2-(4-dimethylaminophenyl)diazenylbenzoate + 2 NADH + 2 H(+)</text>
        <dbReference type="Rhea" id="RHEA:55872"/>
        <dbReference type="ChEBI" id="CHEBI:15378"/>
        <dbReference type="ChEBI" id="CHEBI:15783"/>
        <dbReference type="ChEBI" id="CHEBI:16567"/>
        <dbReference type="ChEBI" id="CHEBI:57540"/>
        <dbReference type="ChEBI" id="CHEBI:57945"/>
        <dbReference type="ChEBI" id="CHEBI:71579"/>
        <dbReference type="EC" id="1.7.1.17"/>
    </reaction>
</comment>
<comment type="cofactor">
    <cofactor evidence="1">
        <name>FMN</name>
        <dbReference type="ChEBI" id="CHEBI:58210"/>
    </cofactor>
    <text evidence="1">Binds 1 FMN per subunit.</text>
</comment>
<comment type="subunit">
    <text evidence="1">Homodimer.</text>
</comment>
<comment type="similarity">
    <text evidence="1">Belongs to the azoreductase type 1 family.</text>
</comment>
<comment type="sequence caution" evidence="2">
    <conflict type="erroneous initiation">
        <sequence resource="EMBL-CDS" id="CAJ25616"/>
    </conflict>
</comment>
<protein>
    <recommendedName>
        <fullName evidence="1">FMN-dependent NADH:quinone oxidoreductase 2</fullName>
        <ecNumber evidence="1">1.6.5.-</ecNumber>
    </recommendedName>
    <alternativeName>
        <fullName evidence="1">Azo-dye reductase 2</fullName>
    </alternativeName>
    <alternativeName>
        <fullName evidence="1">FMN-dependent NADH-azo compound oxidoreductase 2</fullName>
    </alternativeName>
    <alternativeName>
        <fullName evidence="1">FMN-dependent NADH-azoreductase 2</fullName>
        <ecNumber evidence="1">1.7.1.17</ecNumber>
    </alternativeName>
</protein>
<sequence>MRLLHLDSSILTDTSVSRQLTAQVVQDLHAAIDDLHATYRDLAAVPIAHLSGAIAAGFRPLPQPASDAALVAEHALSEQLVDEFLASDIVVIGAPMYNFSVPTQLKAWIDRIAQPGRTFRYTANGPEGLAGGKQLIVASSRGGMYTQGPMASLDFQEAYLTATFGFLGVRDVHFVRAENQSRGPEPAAAALISAQASIADVVRSVGRGVAHARVEA</sequence>
<dbReference type="EC" id="1.6.5.-" evidence="1"/>
<dbReference type="EC" id="1.7.1.17" evidence="1"/>
<dbReference type="EMBL" id="AM039952">
    <property type="protein sequence ID" value="CAJ25616.1"/>
    <property type="status" value="ALT_INIT"/>
    <property type="molecule type" value="Genomic_DNA"/>
</dbReference>
<dbReference type="RefSeq" id="WP_029820407.1">
    <property type="nucleotide sequence ID" value="NZ_CP017190.1"/>
</dbReference>
<dbReference type="SMR" id="Q3BNP7"/>
<dbReference type="STRING" id="456327.BJD11_03210"/>
<dbReference type="KEGG" id="xcv:XCV3885"/>
<dbReference type="eggNOG" id="COG1182">
    <property type="taxonomic scope" value="Bacteria"/>
</dbReference>
<dbReference type="HOGENOM" id="CLU_088964_0_0_6"/>
<dbReference type="Proteomes" id="UP000007069">
    <property type="component" value="Chromosome"/>
</dbReference>
<dbReference type="GO" id="GO:0009055">
    <property type="term" value="F:electron transfer activity"/>
    <property type="evidence" value="ECO:0007669"/>
    <property type="project" value="UniProtKB-UniRule"/>
</dbReference>
<dbReference type="GO" id="GO:0010181">
    <property type="term" value="F:FMN binding"/>
    <property type="evidence" value="ECO:0007669"/>
    <property type="project" value="UniProtKB-UniRule"/>
</dbReference>
<dbReference type="GO" id="GO:0016652">
    <property type="term" value="F:oxidoreductase activity, acting on NAD(P)H as acceptor"/>
    <property type="evidence" value="ECO:0007669"/>
    <property type="project" value="UniProtKB-UniRule"/>
</dbReference>
<dbReference type="GO" id="GO:0016655">
    <property type="term" value="F:oxidoreductase activity, acting on NAD(P)H, quinone or similar compound as acceptor"/>
    <property type="evidence" value="ECO:0007669"/>
    <property type="project" value="InterPro"/>
</dbReference>
<dbReference type="Gene3D" id="3.40.50.360">
    <property type="match status" value="1"/>
</dbReference>
<dbReference type="HAMAP" id="MF_01216">
    <property type="entry name" value="Azoreductase_type1"/>
    <property type="match status" value="1"/>
</dbReference>
<dbReference type="InterPro" id="IPR003680">
    <property type="entry name" value="Flavodoxin_fold"/>
</dbReference>
<dbReference type="InterPro" id="IPR029039">
    <property type="entry name" value="Flavoprotein-like_sf"/>
</dbReference>
<dbReference type="InterPro" id="IPR050104">
    <property type="entry name" value="FMN-dep_NADH:Q_OxRdtase_AzoR1"/>
</dbReference>
<dbReference type="InterPro" id="IPR023048">
    <property type="entry name" value="NADH:quinone_OxRdtase_FMN_depd"/>
</dbReference>
<dbReference type="PANTHER" id="PTHR43741">
    <property type="entry name" value="FMN-DEPENDENT NADH-AZOREDUCTASE 1"/>
    <property type="match status" value="1"/>
</dbReference>
<dbReference type="PANTHER" id="PTHR43741:SF4">
    <property type="entry name" value="FMN-DEPENDENT NADH:QUINONE OXIDOREDUCTASE"/>
    <property type="match status" value="1"/>
</dbReference>
<dbReference type="Pfam" id="PF02525">
    <property type="entry name" value="Flavodoxin_2"/>
    <property type="match status" value="1"/>
</dbReference>
<dbReference type="SUPFAM" id="SSF52218">
    <property type="entry name" value="Flavoproteins"/>
    <property type="match status" value="1"/>
</dbReference>
<reference key="1">
    <citation type="journal article" date="2005" name="J. Bacteriol.">
        <title>Insights into genome plasticity and pathogenicity of the plant pathogenic Bacterium Xanthomonas campestris pv. vesicatoria revealed by the complete genome sequence.</title>
        <authorList>
            <person name="Thieme F."/>
            <person name="Koebnik R."/>
            <person name="Bekel T."/>
            <person name="Berger C."/>
            <person name="Boch J."/>
            <person name="Buettner D."/>
            <person name="Caldana C."/>
            <person name="Gaigalat L."/>
            <person name="Goesmann A."/>
            <person name="Kay S."/>
            <person name="Kirchner O."/>
            <person name="Lanz C."/>
            <person name="Linke B."/>
            <person name="McHardy A.C."/>
            <person name="Meyer F."/>
            <person name="Mittenhuber G."/>
            <person name="Nies D.H."/>
            <person name="Niesbach-Kloesgen U."/>
            <person name="Patschkowski T."/>
            <person name="Rueckert C."/>
            <person name="Rupp O."/>
            <person name="Schneiker S."/>
            <person name="Schuster S.C."/>
            <person name="Vorhoelter F.J."/>
            <person name="Weber E."/>
            <person name="Puehler A."/>
            <person name="Bonas U."/>
            <person name="Bartels D."/>
            <person name="Kaiser O."/>
        </authorList>
    </citation>
    <scope>NUCLEOTIDE SEQUENCE [LARGE SCALE GENOMIC DNA]</scope>
    <source>
        <strain>85-10</strain>
    </source>
</reference>
<gene>
    <name evidence="1" type="primary">azoR2</name>
    <name type="ordered locus">XCV3885</name>
</gene>
<accession>Q3BNP7</accession>
<keyword id="KW-0285">Flavoprotein</keyword>
<keyword id="KW-0288">FMN</keyword>
<keyword id="KW-0520">NAD</keyword>
<keyword id="KW-0560">Oxidoreductase</keyword>
<name>AZOR2_XANE5</name>
<organism>
    <name type="scientific">Xanthomonas euvesicatoria pv. vesicatoria (strain 85-10)</name>
    <name type="common">Xanthomonas campestris pv. vesicatoria</name>
    <dbReference type="NCBI Taxonomy" id="316273"/>
    <lineage>
        <taxon>Bacteria</taxon>
        <taxon>Pseudomonadati</taxon>
        <taxon>Pseudomonadota</taxon>
        <taxon>Gammaproteobacteria</taxon>
        <taxon>Lysobacterales</taxon>
        <taxon>Lysobacteraceae</taxon>
        <taxon>Xanthomonas</taxon>
    </lineage>
</organism>